<name>NU4M_LOCMI</name>
<evidence type="ECO:0000250" key="1"/>
<evidence type="ECO:0000255" key="2"/>
<evidence type="ECO:0000305" key="3"/>
<gene>
    <name type="primary">ND4</name>
</gene>
<reference key="1">
    <citation type="journal article" date="1995" name="J. Mol. Evol.">
        <title>The sequence, organization, and evolution of the Locusta migratoria mitochondrial genome.</title>
        <authorList>
            <person name="Flook P.K."/>
            <person name="Rowell C.H.F."/>
            <person name="Gellissen G."/>
        </authorList>
    </citation>
    <scope>NUCLEOTIDE SEQUENCE [GENOMIC DNA]</scope>
</reference>
<protein>
    <recommendedName>
        <fullName>NADH-ubiquinone oxidoreductase chain 4</fullName>
        <ecNumber>7.1.1.2</ecNumber>
    </recommendedName>
    <alternativeName>
        <fullName>NADH dehydrogenase subunit 4</fullName>
    </alternativeName>
</protein>
<dbReference type="EC" id="7.1.1.2"/>
<dbReference type="EMBL" id="X80245">
    <property type="protein sequence ID" value="CAA56534.1"/>
    <property type="molecule type" value="Genomic_DNA"/>
</dbReference>
<dbReference type="PIR" id="T11474">
    <property type="entry name" value="T11474"/>
</dbReference>
<dbReference type="RefSeq" id="NP_007298.1">
    <property type="nucleotide sequence ID" value="NC_001712.1"/>
</dbReference>
<dbReference type="SMR" id="Q36424"/>
<dbReference type="GeneID" id="807960"/>
<dbReference type="CTD" id="4538"/>
<dbReference type="GO" id="GO:0031966">
    <property type="term" value="C:mitochondrial membrane"/>
    <property type="evidence" value="ECO:0007669"/>
    <property type="project" value="UniProtKB-SubCell"/>
</dbReference>
<dbReference type="GO" id="GO:0008137">
    <property type="term" value="F:NADH dehydrogenase (ubiquinone) activity"/>
    <property type="evidence" value="ECO:0007669"/>
    <property type="project" value="UniProtKB-EC"/>
</dbReference>
<dbReference type="GO" id="GO:0048039">
    <property type="term" value="F:ubiquinone binding"/>
    <property type="evidence" value="ECO:0007669"/>
    <property type="project" value="TreeGrafter"/>
</dbReference>
<dbReference type="GO" id="GO:0042773">
    <property type="term" value="P:ATP synthesis coupled electron transport"/>
    <property type="evidence" value="ECO:0007669"/>
    <property type="project" value="InterPro"/>
</dbReference>
<dbReference type="GO" id="GO:0015990">
    <property type="term" value="P:electron transport coupled proton transport"/>
    <property type="evidence" value="ECO:0007669"/>
    <property type="project" value="TreeGrafter"/>
</dbReference>
<dbReference type="InterPro" id="IPR000260">
    <property type="entry name" value="NADH4_N"/>
</dbReference>
<dbReference type="InterPro" id="IPR003918">
    <property type="entry name" value="NADH_UbQ_OxRdtase"/>
</dbReference>
<dbReference type="InterPro" id="IPR001750">
    <property type="entry name" value="ND/Mrp_TM"/>
</dbReference>
<dbReference type="PANTHER" id="PTHR43507">
    <property type="entry name" value="NADH-UBIQUINONE OXIDOREDUCTASE CHAIN 4"/>
    <property type="match status" value="1"/>
</dbReference>
<dbReference type="PANTHER" id="PTHR43507:SF20">
    <property type="entry name" value="NADH-UBIQUINONE OXIDOREDUCTASE CHAIN 4"/>
    <property type="match status" value="1"/>
</dbReference>
<dbReference type="Pfam" id="PF01059">
    <property type="entry name" value="Oxidored_q5_N"/>
    <property type="match status" value="1"/>
</dbReference>
<dbReference type="Pfam" id="PF00361">
    <property type="entry name" value="Proton_antipo_M"/>
    <property type="match status" value="1"/>
</dbReference>
<dbReference type="PRINTS" id="PR01437">
    <property type="entry name" value="NUOXDRDTASE4"/>
</dbReference>
<organism>
    <name type="scientific">Locusta migratoria</name>
    <name type="common">Migratory locust</name>
    <dbReference type="NCBI Taxonomy" id="7004"/>
    <lineage>
        <taxon>Eukaryota</taxon>
        <taxon>Metazoa</taxon>
        <taxon>Ecdysozoa</taxon>
        <taxon>Arthropoda</taxon>
        <taxon>Hexapoda</taxon>
        <taxon>Insecta</taxon>
        <taxon>Pterygota</taxon>
        <taxon>Neoptera</taxon>
        <taxon>Polyneoptera</taxon>
        <taxon>Orthoptera</taxon>
        <taxon>Caelifera</taxon>
        <taxon>Acrididea</taxon>
        <taxon>Acridomorpha</taxon>
        <taxon>Acridoidea</taxon>
        <taxon>Acrididae</taxon>
        <taxon>Oedipodinae</taxon>
        <taxon>Locusta</taxon>
    </lineage>
</organism>
<comment type="function">
    <text evidence="1">Core subunit of the mitochondrial membrane respiratory chain NADH dehydrogenase (Complex I) that is believed to belong to the minimal assembly required for catalysis. Complex I functions in the transfer of electrons from NADH to the respiratory chain. The immediate electron acceptor for the enzyme is believed to be ubiquinone (By similarity).</text>
</comment>
<comment type="catalytic activity">
    <reaction>
        <text>a ubiquinone + NADH + 5 H(+)(in) = a ubiquinol + NAD(+) + 4 H(+)(out)</text>
        <dbReference type="Rhea" id="RHEA:29091"/>
        <dbReference type="Rhea" id="RHEA-COMP:9565"/>
        <dbReference type="Rhea" id="RHEA-COMP:9566"/>
        <dbReference type="ChEBI" id="CHEBI:15378"/>
        <dbReference type="ChEBI" id="CHEBI:16389"/>
        <dbReference type="ChEBI" id="CHEBI:17976"/>
        <dbReference type="ChEBI" id="CHEBI:57540"/>
        <dbReference type="ChEBI" id="CHEBI:57945"/>
        <dbReference type="EC" id="7.1.1.2"/>
    </reaction>
</comment>
<comment type="subcellular location">
    <subcellularLocation>
        <location evidence="1">Mitochondrion membrane</location>
        <topology evidence="1">Multi-pass membrane protein</topology>
    </subcellularLocation>
</comment>
<comment type="similarity">
    <text evidence="3">Belongs to the complex I subunit 4 family.</text>
</comment>
<keyword id="KW-0249">Electron transport</keyword>
<keyword id="KW-0472">Membrane</keyword>
<keyword id="KW-0496">Mitochondrion</keyword>
<keyword id="KW-0520">NAD</keyword>
<keyword id="KW-0679">Respiratory chain</keyword>
<keyword id="KW-1278">Translocase</keyword>
<keyword id="KW-0812">Transmembrane</keyword>
<keyword id="KW-1133">Transmembrane helix</keyword>
<keyword id="KW-0813">Transport</keyword>
<keyword id="KW-0830">Ubiquinone</keyword>
<sequence length="444" mass="51135">MLKYLFMIIFLIPICLLGNCWWLVHSLIFLLSFIFMISLYSYSDLSMISYYFGVDFYSFMLILLSLWICCLMITASSSIYSSSYHPNFFVFVVLLLLIMLFCSFSSLNLFSFYIFFESSLVPTLFLILGWGYQPERLQAGVYLMFYTLVASLPLLLVLFSINDLFNTLYYPLLIDFGSFYFLFYVFSIFAFLVKMPIFLFHLWLPKAHVEAPISGSMILAGILLKLGGYGIFRMMKVISCLGLSFNYFVLSLSLFGGVIISFVCFRQVDLKSLIAYSSVAHMSLVICGLMTMNWWGCMGSLSLMIGHGISSSGLFCLSNIIYELLGSRSLLINKGMINLMPSMTIWWFLLSSSNMASPPSLNLLGEFSLLNSIISWSSYMILLLIFLSFFSAVYTLYMYSYSQHGLYYSGVYTCSLGYFREYHLLFLHWFPLNLLCLKGEYFYF</sequence>
<accession>Q36424</accession>
<geneLocation type="mitochondrion"/>
<proteinExistence type="inferred from homology"/>
<feature type="chain" id="PRO_0000117949" description="NADH-ubiquinone oxidoreductase chain 4">
    <location>
        <begin position="1"/>
        <end position="444"/>
    </location>
</feature>
<feature type="transmembrane region" description="Helical" evidence="2">
    <location>
        <begin position="4"/>
        <end position="24"/>
    </location>
</feature>
<feature type="transmembrane region" description="Helical" evidence="2">
    <location>
        <begin position="28"/>
        <end position="48"/>
    </location>
</feature>
<feature type="transmembrane region" description="Helical" evidence="2">
    <location>
        <begin position="53"/>
        <end position="73"/>
    </location>
</feature>
<feature type="transmembrane region" description="Helical" evidence="2">
    <location>
        <begin position="87"/>
        <end position="107"/>
    </location>
</feature>
<feature type="transmembrane region" description="Helical" evidence="2">
    <location>
        <begin position="109"/>
        <end position="129"/>
    </location>
</feature>
<feature type="transmembrane region" description="Helical" evidence="2">
    <location>
        <begin position="141"/>
        <end position="161"/>
    </location>
</feature>
<feature type="transmembrane region" description="Helical" evidence="2">
    <location>
        <begin position="173"/>
        <end position="193"/>
    </location>
</feature>
<feature type="transmembrane region" description="Helical" evidence="2">
    <location>
        <begin position="212"/>
        <end position="232"/>
    </location>
</feature>
<feature type="transmembrane region" description="Helical" evidence="2">
    <location>
        <begin position="245"/>
        <end position="265"/>
    </location>
</feature>
<feature type="transmembrane region" description="Helical" evidence="2">
    <location>
        <begin position="272"/>
        <end position="294"/>
    </location>
</feature>
<feature type="transmembrane region" description="Helical" evidence="2">
    <location>
        <begin position="306"/>
        <end position="326"/>
    </location>
</feature>
<feature type="transmembrane region" description="Helical" evidence="2">
    <location>
        <begin position="330"/>
        <end position="350"/>
    </location>
</feature>
<feature type="transmembrane region" description="Helical" evidence="2">
    <location>
        <begin position="373"/>
        <end position="393"/>
    </location>
</feature>